<protein>
    <recommendedName>
        <fullName>FAM10 family protein At4g22670</fullName>
    </recommendedName>
</protein>
<accession>Q93YR3</accession>
<accession>O49648</accession>
<keyword id="KW-0175">Coiled coil</keyword>
<keyword id="KW-0903">Direct protein sequencing</keyword>
<keyword id="KW-0597">Phosphoprotein</keyword>
<keyword id="KW-1185">Reference proteome</keyword>
<keyword id="KW-0677">Repeat</keyword>
<keyword id="KW-0802">TPR repeat</keyword>
<reference key="1">
    <citation type="journal article" date="1999" name="Nature">
        <title>Sequence and analysis of chromosome 4 of the plant Arabidopsis thaliana.</title>
        <authorList>
            <person name="Mayer K.F.X."/>
            <person name="Schueller C."/>
            <person name="Wambutt R."/>
            <person name="Murphy G."/>
            <person name="Volckaert G."/>
            <person name="Pohl T."/>
            <person name="Duesterhoeft A."/>
            <person name="Stiekema W."/>
            <person name="Entian K.-D."/>
            <person name="Terryn N."/>
            <person name="Harris B."/>
            <person name="Ansorge W."/>
            <person name="Brandt P."/>
            <person name="Grivell L.A."/>
            <person name="Rieger M."/>
            <person name="Weichselgartner M."/>
            <person name="de Simone V."/>
            <person name="Obermaier B."/>
            <person name="Mache R."/>
            <person name="Mueller M."/>
            <person name="Kreis M."/>
            <person name="Delseny M."/>
            <person name="Puigdomenech P."/>
            <person name="Watson M."/>
            <person name="Schmidtheini T."/>
            <person name="Reichert B."/>
            <person name="Portetelle D."/>
            <person name="Perez-Alonso M."/>
            <person name="Boutry M."/>
            <person name="Bancroft I."/>
            <person name="Vos P."/>
            <person name="Hoheisel J."/>
            <person name="Zimmermann W."/>
            <person name="Wedler H."/>
            <person name="Ridley P."/>
            <person name="Langham S.-A."/>
            <person name="McCullagh B."/>
            <person name="Bilham L."/>
            <person name="Robben J."/>
            <person name="van der Schueren J."/>
            <person name="Grymonprez B."/>
            <person name="Chuang Y.-J."/>
            <person name="Vandenbussche F."/>
            <person name="Braeken M."/>
            <person name="Weltjens I."/>
            <person name="Voet M."/>
            <person name="Bastiaens I."/>
            <person name="Aert R."/>
            <person name="Defoor E."/>
            <person name="Weitzenegger T."/>
            <person name="Bothe G."/>
            <person name="Ramsperger U."/>
            <person name="Hilbert H."/>
            <person name="Braun M."/>
            <person name="Holzer E."/>
            <person name="Brandt A."/>
            <person name="Peters S."/>
            <person name="van Staveren M."/>
            <person name="Dirkse W."/>
            <person name="Mooijman P."/>
            <person name="Klein Lankhorst R."/>
            <person name="Rose M."/>
            <person name="Hauf J."/>
            <person name="Koetter P."/>
            <person name="Berneiser S."/>
            <person name="Hempel S."/>
            <person name="Feldpausch M."/>
            <person name="Lamberth S."/>
            <person name="Van den Daele H."/>
            <person name="De Keyser A."/>
            <person name="Buysshaert C."/>
            <person name="Gielen J."/>
            <person name="Villarroel R."/>
            <person name="De Clercq R."/>
            <person name="van Montagu M."/>
            <person name="Rogers J."/>
            <person name="Cronin A."/>
            <person name="Quail M.A."/>
            <person name="Bray-Allen S."/>
            <person name="Clark L."/>
            <person name="Doggett J."/>
            <person name="Hall S."/>
            <person name="Kay M."/>
            <person name="Lennard N."/>
            <person name="McLay K."/>
            <person name="Mayes R."/>
            <person name="Pettett A."/>
            <person name="Rajandream M.A."/>
            <person name="Lyne M."/>
            <person name="Benes V."/>
            <person name="Rechmann S."/>
            <person name="Borkova D."/>
            <person name="Bloecker H."/>
            <person name="Scharfe M."/>
            <person name="Grimm M."/>
            <person name="Loehnert T.-H."/>
            <person name="Dose S."/>
            <person name="de Haan M."/>
            <person name="Maarse A.C."/>
            <person name="Schaefer M."/>
            <person name="Mueller-Auer S."/>
            <person name="Gabel C."/>
            <person name="Fuchs M."/>
            <person name="Fartmann B."/>
            <person name="Granderath K."/>
            <person name="Dauner D."/>
            <person name="Herzl A."/>
            <person name="Neumann S."/>
            <person name="Argiriou A."/>
            <person name="Vitale D."/>
            <person name="Liguori R."/>
            <person name="Piravandi E."/>
            <person name="Massenet O."/>
            <person name="Quigley F."/>
            <person name="Clabauld G."/>
            <person name="Muendlein A."/>
            <person name="Felber R."/>
            <person name="Schnabl S."/>
            <person name="Hiller R."/>
            <person name="Schmidt W."/>
            <person name="Lecharny A."/>
            <person name="Aubourg S."/>
            <person name="Chefdor F."/>
            <person name="Cooke R."/>
            <person name="Berger C."/>
            <person name="Monfort A."/>
            <person name="Casacuberta E."/>
            <person name="Gibbons T."/>
            <person name="Weber N."/>
            <person name="Vandenbol M."/>
            <person name="Bargues M."/>
            <person name="Terol J."/>
            <person name="Torres A."/>
            <person name="Perez-Perez A."/>
            <person name="Purnelle B."/>
            <person name="Bent E."/>
            <person name="Johnson S."/>
            <person name="Tacon D."/>
            <person name="Jesse T."/>
            <person name="Heijnen L."/>
            <person name="Schwarz S."/>
            <person name="Scholler P."/>
            <person name="Heber S."/>
            <person name="Francs P."/>
            <person name="Bielke C."/>
            <person name="Frishman D."/>
            <person name="Haase D."/>
            <person name="Lemcke K."/>
            <person name="Mewes H.-W."/>
            <person name="Stocker S."/>
            <person name="Zaccaria P."/>
            <person name="Bevan M."/>
            <person name="Wilson R.K."/>
            <person name="de la Bastide M."/>
            <person name="Habermann K."/>
            <person name="Parnell L."/>
            <person name="Dedhia N."/>
            <person name="Gnoj L."/>
            <person name="Schutz K."/>
            <person name="Huang E."/>
            <person name="Spiegel L."/>
            <person name="Sekhon M."/>
            <person name="Murray J."/>
            <person name="Sheet P."/>
            <person name="Cordes M."/>
            <person name="Abu-Threideh J."/>
            <person name="Stoneking T."/>
            <person name="Kalicki J."/>
            <person name="Graves T."/>
            <person name="Harmon G."/>
            <person name="Edwards J."/>
            <person name="Latreille P."/>
            <person name="Courtney L."/>
            <person name="Cloud J."/>
            <person name="Abbott A."/>
            <person name="Scott K."/>
            <person name="Johnson D."/>
            <person name="Minx P."/>
            <person name="Bentley D."/>
            <person name="Fulton B."/>
            <person name="Miller N."/>
            <person name="Greco T."/>
            <person name="Kemp K."/>
            <person name="Kramer J."/>
            <person name="Fulton L."/>
            <person name="Mardis E."/>
            <person name="Dante M."/>
            <person name="Pepin K."/>
            <person name="Hillier L.W."/>
            <person name="Nelson J."/>
            <person name="Spieth J."/>
            <person name="Ryan E."/>
            <person name="Andrews S."/>
            <person name="Geisel C."/>
            <person name="Layman D."/>
            <person name="Du H."/>
            <person name="Ali J."/>
            <person name="Berghoff A."/>
            <person name="Jones K."/>
            <person name="Drone K."/>
            <person name="Cotton M."/>
            <person name="Joshu C."/>
            <person name="Antonoiu B."/>
            <person name="Zidanic M."/>
            <person name="Strong C."/>
            <person name="Sun H."/>
            <person name="Lamar B."/>
            <person name="Yordan C."/>
            <person name="Ma P."/>
            <person name="Zhong J."/>
            <person name="Preston R."/>
            <person name="Vil D."/>
            <person name="Shekher M."/>
            <person name="Matero A."/>
            <person name="Shah R."/>
            <person name="Swaby I.K."/>
            <person name="O'Shaughnessy A."/>
            <person name="Rodriguez M."/>
            <person name="Hoffman J."/>
            <person name="Till S."/>
            <person name="Granat S."/>
            <person name="Shohdy N."/>
            <person name="Hasegawa A."/>
            <person name="Hameed A."/>
            <person name="Lodhi M."/>
            <person name="Johnson A."/>
            <person name="Chen E."/>
            <person name="Marra M.A."/>
            <person name="Martienssen R."/>
            <person name="McCombie W.R."/>
        </authorList>
    </citation>
    <scope>NUCLEOTIDE SEQUENCE [LARGE SCALE GENOMIC DNA]</scope>
    <source>
        <strain>cv. Columbia</strain>
    </source>
</reference>
<reference key="2">
    <citation type="journal article" date="2017" name="Plant J.">
        <title>Araport11: a complete reannotation of the Arabidopsis thaliana reference genome.</title>
        <authorList>
            <person name="Cheng C.Y."/>
            <person name="Krishnakumar V."/>
            <person name="Chan A.P."/>
            <person name="Thibaud-Nissen F."/>
            <person name="Schobel S."/>
            <person name="Town C.D."/>
        </authorList>
    </citation>
    <scope>GENOME REANNOTATION</scope>
    <source>
        <strain>cv. Columbia</strain>
    </source>
</reference>
<reference key="3">
    <citation type="journal article" date="2003" name="Science">
        <title>Empirical analysis of transcriptional activity in the Arabidopsis genome.</title>
        <authorList>
            <person name="Yamada K."/>
            <person name="Lim J."/>
            <person name="Dale J.M."/>
            <person name="Chen H."/>
            <person name="Shinn P."/>
            <person name="Palm C.J."/>
            <person name="Southwick A.M."/>
            <person name="Wu H.C."/>
            <person name="Kim C.J."/>
            <person name="Nguyen M."/>
            <person name="Pham P.K."/>
            <person name="Cheuk R.F."/>
            <person name="Karlin-Newmann G."/>
            <person name="Liu S.X."/>
            <person name="Lam B."/>
            <person name="Sakano H."/>
            <person name="Wu T."/>
            <person name="Yu G."/>
            <person name="Miranda M."/>
            <person name="Quach H.L."/>
            <person name="Tripp M."/>
            <person name="Chang C.H."/>
            <person name="Lee J.M."/>
            <person name="Toriumi M.J."/>
            <person name="Chan M.M."/>
            <person name="Tang C.C."/>
            <person name="Onodera C.S."/>
            <person name="Deng J.M."/>
            <person name="Akiyama K."/>
            <person name="Ansari Y."/>
            <person name="Arakawa T."/>
            <person name="Banh J."/>
            <person name="Banno F."/>
            <person name="Bowser L."/>
            <person name="Brooks S.Y."/>
            <person name="Carninci P."/>
            <person name="Chao Q."/>
            <person name="Choy N."/>
            <person name="Enju A."/>
            <person name="Goldsmith A.D."/>
            <person name="Gurjal M."/>
            <person name="Hansen N.F."/>
            <person name="Hayashizaki Y."/>
            <person name="Johnson-Hopson C."/>
            <person name="Hsuan V.W."/>
            <person name="Iida K."/>
            <person name="Karnes M."/>
            <person name="Khan S."/>
            <person name="Koesema E."/>
            <person name="Ishida J."/>
            <person name="Jiang P.X."/>
            <person name="Jones T."/>
            <person name="Kawai J."/>
            <person name="Kamiya A."/>
            <person name="Meyers C."/>
            <person name="Nakajima M."/>
            <person name="Narusaka M."/>
            <person name="Seki M."/>
            <person name="Sakurai T."/>
            <person name="Satou M."/>
            <person name="Tamse R."/>
            <person name="Vaysberg M."/>
            <person name="Wallender E.K."/>
            <person name="Wong C."/>
            <person name="Yamamura Y."/>
            <person name="Yuan S."/>
            <person name="Shinozaki K."/>
            <person name="Davis R.W."/>
            <person name="Theologis A."/>
            <person name="Ecker J.R."/>
        </authorList>
    </citation>
    <scope>NUCLEOTIDE SEQUENCE [LARGE SCALE MRNA]</scope>
    <source>
        <strain>cv. Columbia</strain>
    </source>
</reference>
<reference key="4">
    <citation type="submission" date="2002-03" db="EMBL/GenBank/DDBJ databases">
        <title>Full-length cDNA from Arabidopsis thaliana.</title>
        <authorList>
            <person name="Brover V.V."/>
            <person name="Troukhan M.E."/>
            <person name="Alexandrov N.A."/>
            <person name="Lu Y.-P."/>
            <person name="Flavell R.B."/>
            <person name="Feldmann K.A."/>
        </authorList>
    </citation>
    <scope>NUCLEOTIDE SEQUENCE [LARGE SCALE MRNA]</scope>
</reference>
<reference key="5">
    <citation type="journal article" date="2006" name="Phytochemistry">
        <title>Phosphoproteins analysis in plants: a proteomic approach.</title>
        <authorList>
            <person name="Laugesen S."/>
            <person name="Messinese E."/>
            <person name="Hem S."/>
            <person name="Pichereaux C."/>
            <person name="Grat S."/>
            <person name="Ranjeva R."/>
            <person name="Rossignol M."/>
            <person name="Bono J.-J."/>
        </authorList>
    </citation>
    <scope>PROTEIN SEQUENCE OF 77-107</scope>
    <scope>PHOSPHORYLATION AT SER-89</scope>
</reference>
<reference key="6">
    <citation type="journal article" date="2009" name="J. Proteomics">
        <title>Phosphoproteomic analysis of nuclei-enriched fractions from Arabidopsis thaliana.</title>
        <authorList>
            <person name="Jones A.M.E."/>
            <person name="MacLean D."/>
            <person name="Studholme D.J."/>
            <person name="Serna-Sanz A."/>
            <person name="Andreasson E."/>
            <person name="Rathjen J.P."/>
            <person name="Peck S.C."/>
        </authorList>
    </citation>
    <scope>PHOSPHORYLATION [LARGE SCALE ANALYSIS] AT SER-63</scope>
    <scope>IDENTIFICATION BY MASS SPECTROMETRY [LARGE SCALE ANALYSIS]</scope>
    <source>
        <strain>cv. Columbia</strain>
    </source>
</reference>
<reference key="7">
    <citation type="journal article" date="2009" name="Plant Physiol.">
        <title>Large-scale Arabidopsis phosphoproteome profiling reveals novel chloroplast kinase substrates and phosphorylation networks.</title>
        <authorList>
            <person name="Reiland S."/>
            <person name="Messerli G."/>
            <person name="Baerenfaller K."/>
            <person name="Gerrits B."/>
            <person name="Endler A."/>
            <person name="Grossmann J."/>
            <person name="Gruissem W."/>
            <person name="Baginsky S."/>
        </authorList>
    </citation>
    <scope>PHOSPHORYLATION [LARGE SCALE ANALYSIS] AT SER-63 AND SER-89</scope>
    <scope>IDENTIFICATION BY MASS SPECTROMETRY [LARGE SCALE ANALYSIS]</scope>
</reference>
<gene>
    <name type="ordered locus">At4g22670</name>
    <name type="ORF">T12H17.60</name>
</gene>
<organism>
    <name type="scientific">Arabidopsis thaliana</name>
    <name type="common">Mouse-ear cress</name>
    <dbReference type="NCBI Taxonomy" id="3702"/>
    <lineage>
        <taxon>Eukaryota</taxon>
        <taxon>Viridiplantae</taxon>
        <taxon>Streptophyta</taxon>
        <taxon>Embryophyta</taxon>
        <taxon>Tracheophyta</taxon>
        <taxon>Spermatophyta</taxon>
        <taxon>Magnoliopsida</taxon>
        <taxon>eudicotyledons</taxon>
        <taxon>Gunneridae</taxon>
        <taxon>Pentapetalae</taxon>
        <taxon>rosids</taxon>
        <taxon>malvids</taxon>
        <taxon>Brassicales</taxon>
        <taxon>Brassicaceae</taxon>
        <taxon>Camelineae</taxon>
        <taxon>Arabidopsis</taxon>
    </lineage>
</organism>
<sequence>MDSTKLSELKVFIDQCKSDPSLLTTPSLSFFRDYLESLGAKIPTGVHEEDKDTKPRSFVVEESDDDMDETEEVKPKVEEEEEEDEIVESDVELEGDTVEPDNDPPQKMGDSSVEVTDENREAAQEAKGKAMEALSEGNFDEAIEHLTRAITLNPTSAIMYGNRASVYIKLKKPNAAIRDANAALEINPDSAKGYKSRGMARAMLGEWAEAAKDLHLASTIDYDEEISAVLKKVEPNAHKLEEHRRKYDRLRKEREDKKAERDRLRRRAEAQAAYDKAKKEEQSSSSRPSGGGFPGGMPGGFPGGMPGGFPGGMGGMPGGFPGGMGGMGGMPGGFPGGMGGGMPAGMGGGMPGMGGGMPAGMGGGGMPGAGGGMPGGGGMPGGMDFSKILNDPELMTAFSDPEVMAALQDVMKNPANLAKHQANPKVAPVIAKMMGKFAGPQ</sequence>
<proteinExistence type="evidence at protein level"/>
<evidence type="ECO:0000255" key="1"/>
<evidence type="ECO:0000256" key="2">
    <source>
        <dbReference type="SAM" id="MobiDB-lite"/>
    </source>
</evidence>
<evidence type="ECO:0000269" key="3">
    <source>
    </source>
</evidence>
<evidence type="ECO:0000305" key="4"/>
<evidence type="ECO:0007744" key="5">
    <source>
    </source>
</evidence>
<evidence type="ECO:0007744" key="6">
    <source>
    </source>
</evidence>
<name>F10AL_ARATH</name>
<comment type="similarity">
    <text evidence="4">Belongs to the FAM10 family.</text>
</comment>
<comment type="sequence caution" evidence="4">
    <conflict type="erroneous gene model prediction">
        <sequence resource="EMBL-CDS" id="CAA16552"/>
    </conflict>
</comment>
<comment type="sequence caution" evidence="4">
    <conflict type="erroneous gene model prediction">
        <sequence resource="EMBL-CDS" id="CAB79222"/>
    </conflict>
</comment>
<dbReference type="EMBL" id="AL021635">
    <property type="protein sequence ID" value="CAA16552.1"/>
    <property type="status" value="ALT_SEQ"/>
    <property type="molecule type" value="Genomic_DNA"/>
</dbReference>
<dbReference type="EMBL" id="AL161557">
    <property type="protein sequence ID" value="CAB79222.1"/>
    <property type="status" value="ALT_SEQ"/>
    <property type="molecule type" value="Genomic_DNA"/>
</dbReference>
<dbReference type="EMBL" id="CP002687">
    <property type="protein sequence ID" value="AEE84638.1"/>
    <property type="molecule type" value="Genomic_DNA"/>
</dbReference>
<dbReference type="EMBL" id="AY059803">
    <property type="protein sequence ID" value="AAL24285.1"/>
    <property type="molecule type" value="mRNA"/>
</dbReference>
<dbReference type="EMBL" id="BT003349">
    <property type="protein sequence ID" value="AAO29967.1"/>
    <property type="molecule type" value="mRNA"/>
</dbReference>
<dbReference type="EMBL" id="AY087472">
    <property type="protein sequence ID" value="AAM65016.1"/>
    <property type="molecule type" value="mRNA"/>
</dbReference>
<dbReference type="PIR" id="T04562">
    <property type="entry name" value="T04562"/>
</dbReference>
<dbReference type="SMR" id="Q93YR3"/>
<dbReference type="BioGRID" id="13652">
    <property type="interactions" value="1"/>
</dbReference>
<dbReference type="FunCoup" id="Q93YR3">
    <property type="interactions" value="2206"/>
</dbReference>
<dbReference type="STRING" id="3702.Q93YR3"/>
<dbReference type="iPTMnet" id="Q93YR3"/>
<dbReference type="MetOSite" id="Q93YR3"/>
<dbReference type="PaxDb" id="3702-AT4G22670.1"/>
<dbReference type="ProteomicsDB" id="222248"/>
<dbReference type="EnsemblPlants" id="AT4G22670.1">
    <property type="protein sequence ID" value="AT4G22670.1"/>
    <property type="gene ID" value="AT4G22670"/>
</dbReference>
<dbReference type="GeneID" id="828363"/>
<dbReference type="Gramene" id="AT4G22670.1">
    <property type="protein sequence ID" value="AT4G22670.1"/>
    <property type="gene ID" value="AT4G22670"/>
</dbReference>
<dbReference type="KEGG" id="ath:AT4G22670"/>
<dbReference type="Araport" id="AT4G22670"/>
<dbReference type="TAIR" id="AT4G22670">
    <property type="gene designation" value="HIP1"/>
</dbReference>
<dbReference type="eggNOG" id="KOG1308">
    <property type="taxonomic scope" value="Eukaryota"/>
</dbReference>
<dbReference type="HOGENOM" id="CLU_026202_0_0_1"/>
<dbReference type="InParanoid" id="Q93YR3"/>
<dbReference type="OMA" id="YEKRRYK"/>
<dbReference type="OrthoDB" id="533763at2759"/>
<dbReference type="PhylomeDB" id="Q93YR3"/>
<dbReference type="PRO" id="PR:Q93YR3"/>
<dbReference type="Proteomes" id="UP000006548">
    <property type="component" value="Chromosome 4"/>
</dbReference>
<dbReference type="ExpressionAtlas" id="Q93YR3">
    <property type="expression patterns" value="baseline and differential"/>
</dbReference>
<dbReference type="GO" id="GO:0005829">
    <property type="term" value="C:cytosol"/>
    <property type="evidence" value="ECO:0007005"/>
    <property type="project" value="TAIR"/>
</dbReference>
<dbReference type="GO" id="GO:0000118">
    <property type="term" value="C:histone deacetylase complex"/>
    <property type="evidence" value="ECO:0000314"/>
    <property type="project" value="TAIR"/>
</dbReference>
<dbReference type="GO" id="GO:0046983">
    <property type="term" value="F:protein dimerization activity"/>
    <property type="evidence" value="ECO:0007669"/>
    <property type="project" value="InterPro"/>
</dbReference>
<dbReference type="CDD" id="cd14438">
    <property type="entry name" value="Hip_N"/>
    <property type="match status" value="1"/>
</dbReference>
<dbReference type="FunFam" id="1.25.40.10:FF:000112">
    <property type="entry name" value="FAM10 family protein"/>
    <property type="match status" value="1"/>
</dbReference>
<dbReference type="FunFam" id="1.10.260.100:FF:000009">
    <property type="entry name" value="FAM10 family protein At4g22670-like"/>
    <property type="match status" value="1"/>
</dbReference>
<dbReference type="FunFam" id="6.10.250.3420:FF:000001">
    <property type="entry name" value="Hsc70-interacting protein-like protein"/>
    <property type="match status" value="1"/>
</dbReference>
<dbReference type="Gene3D" id="1.10.260.100">
    <property type="match status" value="1"/>
</dbReference>
<dbReference type="Gene3D" id="6.10.250.3420">
    <property type="match status" value="1"/>
</dbReference>
<dbReference type="Gene3D" id="1.25.40.10">
    <property type="entry name" value="Tetratricopeptide repeat domain"/>
    <property type="match status" value="1"/>
</dbReference>
<dbReference type="InterPro" id="IPR034649">
    <property type="entry name" value="Hip_N"/>
</dbReference>
<dbReference type="InterPro" id="IPR041243">
    <property type="entry name" value="STI1/HOP_DP"/>
</dbReference>
<dbReference type="InterPro" id="IPR006636">
    <property type="entry name" value="STI1_HS-bd"/>
</dbReference>
<dbReference type="InterPro" id="IPR011990">
    <property type="entry name" value="TPR-like_helical_dom_sf"/>
</dbReference>
<dbReference type="InterPro" id="IPR019734">
    <property type="entry name" value="TPR_rpt"/>
</dbReference>
<dbReference type="PANTHER" id="PTHR45883">
    <property type="entry name" value="HSC70-INTERACTING PROTEIN"/>
    <property type="match status" value="1"/>
</dbReference>
<dbReference type="PANTHER" id="PTHR45883:SF2">
    <property type="entry name" value="HSC70-INTERACTING PROTEIN"/>
    <property type="match status" value="1"/>
</dbReference>
<dbReference type="Pfam" id="PF18253">
    <property type="entry name" value="HipN"/>
    <property type="match status" value="1"/>
</dbReference>
<dbReference type="Pfam" id="PF17830">
    <property type="entry name" value="STI1-HOP_DP"/>
    <property type="match status" value="1"/>
</dbReference>
<dbReference type="Pfam" id="PF13432">
    <property type="entry name" value="TPR_16"/>
    <property type="match status" value="1"/>
</dbReference>
<dbReference type="SMART" id="SM00727">
    <property type="entry name" value="STI1"/>
    <property type="match status" value="1"/>
</dbReference>
<dbReference type="SMART" id="SM00028">
    <property type="entry name" value="TPR"/>
    <property type="match status" value="3"/>
</dbReference>
<dbReference type="SUPFAM" id="SSF48452">
    <property type="entry name" value="TPR-like"/>
    <property type="match status" value="1"/>
</dbReference>
<dbReference type="PROSITE" id="PS50005">
    <property type="entry name" value="TPR"/>
    <property type="match status" value="3"/>
</dbReference>
<dbReference type="PROSITE" id="PS50293">
    <property type="entry name" value="TPR_REGION"/>
    <property type="match status" value="1"/>
</dbReference>
<feature type="chain" id="PRO_0000261599" description="FAM10 family protein At4g22670">
    <location>
        <begin position="1"/>
        <end position="441"/>
    </location>
</feature>
<feature type="repeat" description="TPR 1">
    <location>
        <begin position="121"/>
        <end position="156"/>
    </location>
</feature>
<feature type="repeat" description="TPR 2">
    <location>
        <begin position="158"/>
        <end position="190"/>
    </location>
</feature>
<feature type="repeat" description="TPR 3">
    <location>
        <begin position="191"/>
        <end position="224"/>
    </location>
</feature>
<feature type="domain" description="STI1">
    <location>
        <begin position="391"/>
        <end position="430"/>
    </location>
</feature>
<feature type="region of interest" description="Disordered" evidence="2">
    <location>
        <begin position="41"/>
        <end position="114"/>
    </location>
</feature>
<feature type="region of interest" description="Disordered" evidence="2">
    <location>
        <begin position="244"/>
        <end position="314"/>
    </location>
</feature>
<feature type="coiled-coil region" evidence="1">
    <location>
        <begin position="236"/>
        <end position="285"/>
    </location>
</feature>
<feature type="compositionally biased region" description="Basic and acidic residues" evidence="2">
    <location>
        <begin position="46"/>
        <end position="55"/>
    </location>
</feature>
<feature type="compositionally biased region" description="Acidic residues" evidence="2">
    <location>
        <begin position="61"/>
        <end position="71"/>
    </location>
</feature>
<feature type="compositionally biased region" description="Acidic residues" evidence="2">
    <location>
        <begin position="78"/>
        <end position="102"/>
    </location>
</feature>
<feature type="compositionally biased region" description="Basic and acidic residues" evidence="2">
    <location>
        <begin position="244"/>
        <end position="282"/>
    </location>
</feature>
<feature type="compositionally biased region" description="Gly residues" evidence="2">
    <location>
        <begin position="289"/>
        <end position="314"/>
    </location>
</feature>
<feature type="modified residue" description="Phosphoserine" evidence="5 6">
    <location>
        <position position="63"/>
    </location>
</feature>
<feature type="modified residue" description="Phosphoserine" evidence="3 6">
    <location>
        <position position="89"/>
    </location>
</feature>